<organism>
    <name type="scientific">Francisella tularensis subsp. tularensis (strain SCHU S4 / Schu 4)</name>
    <dbReference type="NCBI Taxonomy" id="177416"/>
    <lineage>
        <taxon>Bacteria</taxon>
        <taxon>Pseudomonadati</taxon>
        <taxon>Pseudomonadota</taxon>
        <taxon>Gammaproteobacteria</taxon>
        <taxon>Thiotrichales</taxon>
        <taxon>Francisellaceae</taxon>
        <taxon>Francisella</taxon>
    </lineage>
</organism>
<name>TRPA_FRATT</name>
<gene>
    <name evidence="1" type="primary">trpA</name>
    <name type="ordered locus">FTT_1772c</name>
</gene>
<protein>
    <recommendedName>
        <fullName evidence="1">Tryptophan synthase alpha chain</fullName>
        <ecNumber evidence="1">4.2.1.20</ecNumber>
    </recommendedName>
</protein>
<sequence>MTNRYTTLFANLEKRNEGAFIPFVTIGDPNKALSFEIIDTLVSSGADALELGIPFSDPLADGPTIQEANIRALESGITPKDCFDILTKIRAKYPHIPIGLLLYANLVYANGIENFYQKCLDAGVDSILIADVPAHESKEFRDIAKKVGIAQIFIAPPDASESTLKQISELGSGYTYLLSRVGVTGTETAANMPVEDVLTKLREYNAPKPVLGFGISKPEQVQQAIKAGAAGAISGSATVKIIQNNISNKQKMLNELTYFVKEMKAATLN</sequence>
<proteinExistence type="evidence at protein level"/>
<reference key="1">
    <citation type="journal article" date="2005" name="Nat. Genet.">
        <title>The complete genome sequence of Francisella tularensis, the causative agent of tularemia.</title>
        <authorList>
            <person name="Larsson P."/>
            <person name="Oyston P.C.F."/>
            <person name="Chain P."/>
            <person name="Chu M.C."/>
            <person name="Duffield M."/>
            <person name="Fuxelius H.-H."/>
            <person name="Garcia E."/>
            <person name="Haelltorp G."/>
            <person name="Johansson D."/>
            <person name="Isherwood K.E."/>
            <person name="Karp P.D."/>
            <person name="Larsson E."/>
            <person name="Liu Y."/>
            <person name="Michell S."/>
            <person name="Prior J."/>
            <person name="Prior R."/>
            <person name="Malfatti S."/>
            <person name="Sjoestedt A."/>
            <person name="Svensson K."/>
            <person name="Thompson N."/>
            <person name="Vergez L."/>
            <person name="Wagg J.K."/>
            <person name="Wren B.W."/>
            <person name="Lindler L.E."/>
            <person name="Andersson S.G.E."/>
            <person name="Forsman M."/>
            <person name="Titball R.W."/>
        </authorList>
    </citation>
    <scope>NUCLEOTIDE SEQUENCE [LARGE SCALE GENOMIC DNA]</scope>
    <source>
        <strain>SCHU S4 / Schu 4</strain>
    </source>
</reference>
<keyword id="KW-0002">3D-structure</keyword>
<keyword id="KW-0028">Amino-acid biosynthesis</keyword>
<keyword id="KW-0057">Aromatic amino acid biosynthesis</keyword>
<keyword id="KW-0456">Lyase</keyword>
<keyword id="KW-1185">Reference proteome</keyword>
<keyword id="KW-0822">Tryptophan biosynthesis</keyword>
<evidence type="ECO:0000255" key="1">
    <source>
        <dbReference type="HAMAP-Rule" id="MF_00131"/>
    </source>
</evidence>
<evidence type="ECO:0007829" key="2">
    <source>
        <dbReference type="PDB" id="5KZM"/>
    </source>
</evidence>
<feature type="chain" id="PRO_0000098782" description="Tryptophan synthase alpha chain">
    <location>
        <begin position="1"/>
        <end position="269"/>
    </location>
</feature>
<feature type="active site" description="Proton acceptor" evidence="1">
    <location>
        <position position="50"/>
    </location>
</feature>
<feature type="active site" description="Proton acceptor" evidence="1">
    <location>
        <position position="61"/>
    </location>
</feature>
<feature type="helix" evidence="2">
    <location>
        <begin position="4"/>
        <end position="14"/>
    </location>
</feature>
<feature type="strand" evidence="2">
    <location>
        <begin position="19"/>
        <end position="25"/>
    </location>
</feature>
<feature type="helix" evidence="2">
    <location>
        <begin position="31"/>
        <end position="43"/>
    </location>
</feature>
<feature type="strand" evidence="2">
    <location>
        <begin position="47"/>
        <end position="52"/>
    </location>
</feature>
<feature type="helix" evidence="2">
    <location>
        <begin position="63"/>
        <end position="74"/>
    </location>
</feature>
<feature type="helix" evidence="2">
    <location>
        <begin position="79"/>
        <end position="92"/>
    </location>
</feature>
<feature type="strand" evidence="2">
    <location>
        <begin position="98"/>
        <end position="102"/>
    </location>
</feature>
<feature type="helix" evidence="2">
    <location>
        <begin position="104"/>
        <end position="108"/>
    </location>
</feature>
<feature type="helix" evidence="2">
    <location>
        <begin position="112"/>
        <end position="121"/>
    </location>
</feature>
<feature type="strand" evidence="2">
    <location>
        <begin position="126"/>
        <end position="129"/>
    </location>
</feature>
<feature type="helix" evidence="2">
    <location>
        <begin position="134"/>
        <end position="136"/>
    </location>
</feature>
<feature type="helix" evidence="2">
    <location>
        <begin position="138"/>
        <end position="147"/>
    </location>
</feature>
<feature type="strand" evidence="2">
    <location>
        <begin position="150"/>
        <end position="152"/>
    </location>
</feature>
<feature type="helix" evidence="2">
    <location>
        <begin position="161"/>
        <end position="170"/>
    </location>
</feature>
<feature type="strand" evidence="2">
    <location>
        <begin position="175"/>
        <end position="177"/>
    </location>
</feature>
<feature type="helix" evidence="2">
    <location>
        <begin position="194"/>
        <end position="203"/>
    </location>
</feature>
<feature type="strand" evidence="2">
    <location>
        <begin position="209"/>
        <end position="211"/>
    </location>
</feature>
<feature type="helix" evidence="2">
    <location>
        <begin position="218"/>
        <end position="225"/>
    </location>
</feature>
<feature type="turn" evidence="2">
    <location>
        <begin position="226"/>
        <end position="228"/>
    </location>
</feature>
<feature type="strand" evidence="2">
    <location>
        <begin position="230"/>
        <end position="235"/>
    </location>
</feature>
<feature type="helix" evidence="2">
    <location>
        <begin position="236"/>
        <end position="243"/>
    </location>
</feature>
<feature type="turn" evidence="2">
    <location>
        <begin position="244"/>
        <end position="247"/>
    </location>
</feature>
<feature type="helix" evidence="2">
    <location>
        <begin position="249"/>
        <end position="265"/>
    </location>
</feature>
<dbReference type="EC" id="4.2.1.20" evidence="1"/>
<dbReference type="EMBL" id="AJ749949">
    <property type="protein sequence ID" value="CAG46405.1"/>
    <property type="molecule type" value="Genomic_DNA"/>
</dbReference>
<dbReference type="RefSeq" id="WP_003022758.1">
    <property type="nucleotide sequence ID" value="NC_006570.2"/>
</dbReference>
<dbReference type="RefSeq" id="YP_170662.1">
    <property type="nucleotide sequence ID" value="NC_006570.2"/>
</dbReference>
<dbReference type="PDB" id="5KZM">
    <property type="method" value="X-ray"/>
    <property type="resolution" value="2.80 A"/>
    <property type="chains" value="A=1-269"/>
</dbReference>
<dbReference type="PDBsum" id="5KZM"/>
<dbReference type="SMR" id="Q5NE80"/>
<dbReference type="STRING" id="177416.FTT_1772c"/>
<dbReference type="DNASU" id="3190980"/>
<dbReference type="EnsemblBacteria" id="CAG46405">
    <property type="protein sequence ID" value="CAG46405"/>
    <property type="gene ID" value="FTT_1772c"/>
</dbReference>
<dbReference type="GeneID" id="39482346"/>
<dbReference type="KEGG" id="ftu:FTT_1772c"/>
<dbReference type="eggNOG" id="COG0159">
    <property type="taxonomic scope" value="Bacteria"/>
</dbReference>
<dbReference type="OrthoDB" id="9804578at2"/>
<dbReference type="UniPathway" id="UPA00035">
    <property type="reaction ID" value="UER00044"/>
</dbReference>
<dbReference type="Proteomes" id="UP000001174">
    <property type="component" value="Chromosome"/>
</dbReference>
<dbReference type="GO" id="GO:0005829">
    <property type="term" value="C:cytosol"/>
    <property type="evidence" value="ECO:0007669"/>
    <property type="project" value="TreeGrafter"/>
</dbReference>
<dbReference type="GO" id="GO:0004834">
    <property type="term" value="F:tryptophan synthase activity"/>
    <property type="evidence" value="ECO:0007669"/>
    <property type="project" value="UniProtKB-UniRule"/>
</dbReference>
<dbReference type="CDD" id="cd04724">
    <property type="entry name" value="Tryptophan_synthase_alpha"/>
    <property type="match status" value="1"/>
</dbReference>
<dbReference type="FunFam" id="3.20.20.70:FF:000037">
    <property type="entry name" value="Tryptophan synthase alpha chain"/>
    <property type="match status" value="1"/>
</dbReference>
<dbReference type="Gene3D" id="3.20.20.70">
    <property type="entry name" value="Aldolase class I"/>
    <property type="match status" value="1"/>
</dbReference>
<dbReference type="HAMAP" id="MF_00131">
    <property type="entry name" value="Trp_synth_alpha"/>
    <property type="match status" value="1"/>
</dbReference>
<dbReference type="InterPro" id="IPR013785">
    <property type="entry name" value="Aldolase_TIM"/>
</dbReference>
<dbReference type="InterPro" id="IPR011060">
    <property type="entry name" value="RibuloseP-bd_barrel"/>
</dbReference>
<dbReference type="InterPro" id="IPR018204">
    <property type="entry name" value="Trp_synthase_alpha_AS"/>
</dbReference>
<dbReference type="InterPro" id="IPR002028">
    <property type="entry name" value="Trp_synthase_suA"/>
</dbReference>
<dbReference type="NCBIfam" id="TIGR00262">
    <property type="entry name" value="trpA"/>
    <property type="match status" value="1"/>
</dbReference>
<dbReference type="PANTHER" id="PTHR43406:SF1">
    <property type="entry name" value="TRYPTOPHAN SYNTHASE ALPHA CHAIN, CHLOROPLASTIC"/>
    <property type="match status" value="1"/>
</dbReference>
<dbReference type="PANTHER" id="PTHR43406">
    <property type="entry name" value="TRYPTOPHAN SYNTHASE, ALPHA CHAIN"/>
    <property type="match status" value="1"/>
</dbReference>
<dbReference type="Pfam" id="PF00290">
    <property type="entry name" value="Trp_syntA"/>
    <property type="match status" value="1"/>
</dbReference>
<dbReference type="SUPFAM" id="SSF51366">
    <property type="entry name" value="Ribulose-phoshate binding barrel"/>
    <property type="match status" value="1"/>
</dbReference>
<dbReference type="PROSITE" id="PS00167">
    <property type="entry name" value="TRP_SYNTHASE_ALPHA"/>
    <property type="match status" value="1"/>
</dbReference>
<comment type="function">
    <text evidence="1">The alpha subunit is responsible for the aldol cleavage of indoleglycerol phosphate to indole and glyceraldehyde 3-phosphate.</text>
</comment>
<comment type="catalytic activity">
    <reaction evidence="1">
        <text>(1S,2R)-1-C-(indol-3-yl)glycerol 3-phosphate + L-serine = D-glyceraldehyde 3-phosphate + L-tryptophan + H2O</text>
        <dbReference type="Rhea" id="RHEA:10532"/>
        <dbReference type="ChEBI" id="CHEBI:15377"/>
        <dbReference type="ChEBI" id="CHEBI:33384"/>
        <dbReference type="ChEBI" id="CHEBI:57912"/>
        <dbReference type="ChEBI" id="CHEBI:58866"/>
        <dbReference type="ChEBI" id="CHEBI:59776"/>
        <dbReference type="EC" id="4.2.1.20"/>
    </reaction>
</comment>
<comment type="pathway">
    <text evidence="1">Amino-acid biosynthesis; L-tryptophan biosynthesis; L-tryptophan from chorismate: step 5/5.</text>
</comment>
<comment type="subunit">
    <text evidence="1">Tetramer of two alpha and two beta chains.</text>
</comment>
<comment type="similarity">
    <text evidence="1">Belongs to the TrpA family.</text>
</comment>
<accession>Q5NE80</accession>